<reference key="1">
    <citation type="journal article" date="2004" name="Proc. Natl. Acad. Sci. U.S.A.">
        <title>The complete genomic sequence of Nocardia farcinica IFM 10152.</title>
        <authorList>
            <person name="Ishikawa J."/>
            <person name="Yamashita A."/>
            <person name="Mikami Y."/>
            <person name="Hoshino Y."/>
            <person name="Kurita H."/>
            <person name="Hotta K."/>
            <person name="Shiba T."/>
            <person name="Hattori M."/>
        </authorList>
    </citation>
    <scope>NUCLEOTIDE SEQUENCE [LARGE SCALE GENOMIC DNA]</scope>
    <source>
        <strain>IFM 10152</strain>
    </source>
</reference>
<comment type="function">
    <text evidence="1">Guanylyltransferase that catalyzes the activation of phosphoenolpyruvate (PEP) as enolpyruvoyl-2-diphospho-5'-guanosine, via the condensation of PEP with GTP. It is involved in the biosynthesis of coenzyme F420, a hydride carrier cofactor.</text>
</comment>
<comment type="catalytic activity">
    <reaction evidence="1">
        <text>phosphoenolpyruvate + GTP + H(+) = enolpyruvoyl-2-diphospho-5'-guanosine + diphosphate</text>
        <dbReference type="Rhea" id="RHEA:30519"/>
        <dbReference type="ChEBI" id="CHEBI:15378"/>
        <dbReference type="ChEBI" id="CHEBI:33019"/>
        <dbReference type="ChEBI" id="CHEBI:37565"/>
        <dbReference type="ChEBI" id="CHEBI:58702"/>
        <dbReference type="ChEBI" id="CHEBI:143701"/>
        <dbReference type="EC" id="2.7.7.105"/>
    </reaction>
</comment>
<comment type="pathway">
    <text evidence="1">Cofactor biosynthesis; coenzyme F420 biosynthesis.</text>
</comment>
<comment type="similarity">
    <text evidence="1">Belongs to the CofC family.</text>
</comment>
<name>FBID_NOCFA</name>
<proteinExistence type="inferred from homology"/>
<organism>
    <name type="scientific">Nocardia farcinica (strain IFM 10152)</name>
    <dbReference type="NCBI Taxonomy" id="247156"/>
    <lineage>
        <taxon>Bacteria</taxon>
        <taxon>Bacillati</taxon>
        <taxon>Actinomycetota</taxon>
        <taxon>Actinomycetes</taxon>
        <taxon>Mycobacteriales</taxon>
        <taxon>Nocardiaceae</taxon>
        <taxon>Nocardia</taxon>
    </lineage>
</organism>
<protein>
    <recommendedName>
        <fullName evidence="1">Phosphoenolpyruvate guanylyltransferase</fullName>
        <shortName evidence="1">PEP guanylyltransferase</shortName>
        <ecNumber evidence="1">2.7.7.105</ecNumber>
    </recommendedName>
</protein>
<dbReference type="EC" id="2.7.7.105" evidence="1"/>
<dbReference type="EMBL" id="AP006618">
    <property type="protein sequence ID" value="BAD59056.1"/>
    <property type="molecule type" value="Genomic_DNA"/>
</dbReference>
<dbReference type="SMR" id="Q5YRY5"/>
<dbReference type="STRING" id="247156.NFA_42070"/>
<dbReference type="GeneID" id="61134841"/>
<dbReference type="KEGG" id="nfa:NFA_42070"/>
<dbReference type="eggNOG" id="COG1920">
    <property type="taxonomic scope" value="Bacteria"/>
</dbReference>
<dbReference type="HOGENOM" id="CLU_076569_0_0_11"/>
<dbReference type="OrthoDB" id="9151145at2"/>
<dbReference type="UniPathway" id="UPA00071"/>
<dbReference type="Proteomes" id="UP000006820">
    <property type="component" value="Chromosome"/>
</dbReference>
<dbReference type="GO" id="GO:0005525">
    <property type="term" value="F:GTP binding"/>
    <property type="evidence" value="ECO:0007669"/>
    <property type="project" value="UniProtKB-KW"/>
</dbReference>
<dbReference type="GO" id="GO:0043814">
    <property type="term" value="F:phospholactate guanylyltransferase activity"/>
    <property type="evidence" value="ECO:0007669"/>
    <property type="project" value="InterPro"/>
</dbReference>
<dbReference type="GO" id="GO:0052645">
    <property type="term" value="P:F420-0 metabolic process"/>
    <property type="evidence" value="ECO:0007669"/>
    <property type="project" value="UniProtKB-UniRule"/>
</dbReference>
<dbReference type="Gene3D" id="3.90.550.10">
    <property type="entry name" value="Spore Coat Polysaccharide Biosynthesis Protein SpsA, Chain A"/>
    <property type="match status" value="1"/>
</dbReference>
<dbReference type="HAMAP" id="MF_02114">
    <property type="entry name" value="CofC"/>
    <property type="match status" value="1"/>
</dbReference>
<dbReference type="InterPro" id="IPR002835">
    <property type="entry name" value="CofC"/>
</dbReference>
<dbReference type="InterPro" id="IPR029044">
    <property type="entry name" value="Nucleotide-diphossugar_trans"/>
</dbReference>
<dbReference type="NCBIfam" id="TIGR03552">
    <property type="entry name" value="F420_cofC"/>
    <property type="match status" value="1"/>
</dbReference>
<dbReference type="PANTHER" id="PTHR40392">
    <property type="entry name" value="2-PHOSPHO-L-LACTATE GUANYLYLTRANSFERASE"/>
    <property type="match status" value="1"/>
</dbReference>
<dbReference type="PANTHER" id="PTHR40392:SF1">
    <property type="entry name" value="2-PHOSPHO-L-LACTATE GUANYLYLTRANSFERASE"/>
    <property type="match status" value="1"/>
</dbReference>
<dbReference type="Pfam" id="PF01983">
    <property type="entry name" value="CofC"/>
    <property type="match status" value="1"/>
</dbReference>
<dbReference type="SUPFAM" id="SSF53448">
    <property type="entry name" value="Nucleotide-diphospho-sugar transferases"/>
    <property type="match status" value="1"/>
</dbReference>
<accession>Q5YRY5</accession>
<sequence length="226" mass="23324">MRPHAVHALIAVKRLDQAKSRLADRLRPEHRARLVLAMLADTMTATTSVPGIAAVTVVTPDAAVADLARSLGGHVHPEPAADSADSLNAALAAAAAGVRARHGGVDLLALQADLPALRPDELADVLATAPRGGRAIVTDHAGTGTAALLVRDGGELAPAFGPDSARRHIAAGAVDLPGEWPGLRRDVDTAADLERAVELGAGSSTRALLRDIGWSCRVHEPARRVC</sequence>
<evidence type="ECO:0000255" key="1">
    <source>
        <dbReference type="HAMAP-Rule" id="MF_02114"/>
    </source>
</evidence>
<gene>
    <name evidence="1" type="primary">fbiD</name>
    <name type="ordered locus">NFA_42070</name>
</gene>
<feature type="chain" id="PRO_0000398702" description="Phosphoenolpyruvate guanylyltransferase">
    <location>
        <begin position="1"/>
        <end position="226"/>
    </location>
</feature>
<feature type="binding site" evidence="1">
    <location>
        <position position="145"/>
    </location>
    <ligand>
        <name>phosphoenolpyruvate</name>
        <dbReference type="ChEBI" id="CHEBI:58702"/>
    </ligand>
</feature>
<feature type="binding site" evidence="1">
    <location>
        <position position="161"/>
    </location>
    <ligand>
        <name>phosphoenolpyruvate</name>
        <dbReference type="ChEBI" id="CHEBI:58702"/>
    </ligand>
</feature>
<feature type="binding site" evidence="1">
    <location>
        <position position="164"/>
    </location>
    <ligand>
        <name>phosphoenolpyruvate</name>
        <dbReference type="ChEBI" id="CHEBI:58702"/>
    </ligand>
</feature>
<keyword id="KW-0342">GTP-binding</keyword>
<keyword id="KW-0547">Nucleotide-binding</keyword>
<keyword id="KW-0548">Nucleotidyltransferase</keyword>
<keyword id="KW-1185">Reference proteome</keyword>
<keyword id="KW-0808">Transferase</keyword>